<gene>
    <name evidence="1" type="primary">mutH</name>
    <name type="ordered locus">APL_1109</name>
</gene>
<comment type="function">
    <text evidence="1">Sequence-specific endonuclease that cleaves unmethylated GATC sequences. It is involved in DNA mismatch repair.</text>
</comment>
<comment type="subcellular location">
    <subcellularLocation>
        <location evidence="1">Cytoplasm</location>
    </subcellularLocation>
</comment>
<comment type="similarity">
    <text evidence="1">Belongs to the MutH family.</text>
</comment>
<name>MUTH_ACTP2</name>
<protein>
    <recommendedName>
        <fullName evidence="1">DNA mismatch repair protein MutH</fullName>
    </recommendedName>
    <alternativeName>
        <fullName evidence="1">Methyl-directed mismatch repair protein</fullName>
    </alternativeName>
</protein>
<feature type="chain" id="PRO_1000046692" description="DNA mismatch repair protein MutH">
    <location>
        <begin position="1"/>
        <end position="226"/>
    </location>
</feature>
<reference key="1">
    <citation type="journal article" date="2008" name="J. Bacteriol.">
        <title>The complete genome sequence of Actinobacillus pleuropneumoniae L20 (serotype 5b).</title>
        <authorList>
            <person name="Foote S.J."/>
            <person name="Bosse J.T."/>
            <person name="Bouevitch A.B."/>
            <person name="Langford P.R."/>
            <person name="Young N.M."/>
            <person name="Nash J.H.E."/>
        </authorList>
    </citation>
    <scope>NUCLEOTIDE SEQUENCE [LARGE SCALE GENOMIC DNA]</scope>
    <source>
        <strain>L20</strain>
    </source>
</reference>
<dbReference type="EMBL" id="CP000569">
    <property type="protein sequence ID" value="ABN74201.1"/>
    <property type="molecule type" value="Genomic_DNA"/>
</dbReference>
<dbReference type="RefSeq" id="WP_009875487.1">
    <property type="nucleotide sequence ID" value="NC_009053.1"/>
</dbReference>
<dbReference type="SMR" id="A3N1B5"/>
<dbReference type="STRING" id="416269.APL_1109"/>
<dbReference type="EnsemblBacteria" id="ABN74201">
    <property type="protein sequence ID" value="ABN74201"/>
    <property type="gene ID" value="APL_1109"/>
</dbReference>
<dbReference type="KEGG" id="apl:APL_1109"/>
<dbReference type="PATRIC" id="fig|416269.6.peg.1157"/>
<dbReference type="eggNOG" id="COG3066">
    <property type="taxonomic scope" value="Bacteria"/>
</dbReference>
<dbReference type="HOGENOM" id="CLU_086669_0_0_6"/>
<dbReference type="Proteomes" id="UP000001432">
    <property type="component" value="Chromosome"/>
</dbReference>
<dbReference type="GO" id="GO:0005737">
    <property type="term" value="C:cytoplasm"/>
    <property type="evidence" value="ECO:0007669"/>
    <property type="project" value="UniProtKB-SubCell"/>
</dbReference>
<dbReference type="GO" id="GO:0003677">
    <property type="term" value="F:DNA binding"/>
    <property type="evidence" value="ECO:0007669"/>
    <property type="project" value="InterPro"/>
</dbReference>
<dbReference type="GO" id="GO:0004519">
    <property type="term" value="F:endonuclease activity"/>
    <property type="evidence" value="ECO:0007669"/>
    <property type="project" value="UniProtKB-UniRule"/>
</dbReference>
<dbReference type="GO" id="GO:0006304">
    <property type="term" value="P:DNA modification"/>
    <property type="evidence" value="ECO:0007669"/>
    <property type="project" value="InterPro"/>
</dbReference>
<dbReference type="GO" id="GO:0006298">
    <property type="term" value="P:mismatch repair"/>
    <property type="evidence" value="ECO:0007669"/>
    <property type="project" value="UniProtKB-UniRule"/>
</dbReference>
<dbReference type="CDD" id="cd00583">
    <property type="entry name" value="MutH-like"/>
    <property type="match status" value="1"/>
</dbReference>
<dbReference type="Gene3D" id="3.40.600.10">
    <property type="entry name" value="DNA mismatch repair MutH/Restriction endonuclease, type II"/>
    <property type="match status" value="1"/>
</dbReference>
<dbReference type="HAMAP" id="MF_00759">
    <property type="entry name" value="MutH"/>
    <property type="match status" value="1"/>
</dbReference>
<dbReference type="InterPro" id="IPR004230">
    <property type="entry name" value="DNA_mismatch_repair_MutH"/>
</dbReference>
<dbReference type="InterPro" id="IPR011337">
    <property type="entry name" value="DNA_rep_MutH/RE_typeII_Sau3AI"/>
</dbReference>
<dbReference type="InterPro" id="IPR037057">
    <property type="entry name" value="DNA_rep_MutH/T2_RE_sf"/>
</dbReference>
<dbReference type="InterPro" id="IPR011335">
    <property type="entry name" value="Restrct_endonuc-II-like"/>
</dbReference>
<dbReference type="NCBIfam" id="TIGR02248">
    <property type="entry name" value="mutH_TIGR"/>
    <property type="match status" value="1"/>
</dbReference>
<dbReference type="NCBIfam" id="NF003458">
    <property type="entry name" value="PRK05070.1"/>
    <property type="match status" value="1"/>
</dbReference>
<dbReference type="Pfam" id="PF02976">
    <property type="entry name" value="MutH"/>
    <property type="match status" value="1"/>
</dbReference>
<dbReference type="SMART" id="SM00927">
    <property type="entry name" value="MutH"/>
    <property type="match status" value="1"/>
</dbReference>
<dbReference type="SUPFAM" id="SSF52980">
    <property type="entry name" value="Restriction endonuclease-like"/>
    <property type="match status" value="1"/>
</dbReference>
<evidence type="ECO:0000255" key="1">
    <source>
        <dbReference type="HAMAP-Rule" id="MF_00759"/>
    </source>
</evidence>
<sequence length="226" mass="25793">MQLSTFSHSEDELLKKANWLAGFTLGEIAHQLNIDVPLDLRRDKGWVGQLIETALGAKAGSKPEQDFAHLGIELKTIPINHKGFPLETTFVSLAPLTQNTGITWQTSHVRHKLQKVLWIPVQGERHIPVAERHIGQPILWEPSCEQEQQLKNDWEELMEYIIFGRLNEINATLGEVLQLRPKGRNRRSLTAAVNQQGERVQSLPLGFYLRKQFTAEILQNFLRSPL</sequence>
<proteinExistence type="inferred from homology"/>
<keyword id="KW-0963">Cytoplasm</keyword>
<keyword id="KW-0227">DNA damage</keyword>
<keyword id="KW-0234">DNA repair</keyword>
<keyword id="KW-0255">Endonuclease</keyword>
<keyword id="KW-0378">Hydrolase</keyword>
<keyword id="KW-0540">Nuclease</keyword>
<keyword id="KW-1185">Reference proteome</keyword>
<accession>A3N1B5</accession>
<organism>
    <name type="scientific">Actinobacillus pleuropneumoniae serotype 5b (strain L20)</name>
    <dbReference type="NCBI Taxonomy" id="416269"/>
    <lineage>
        <taxon>Bacteria</taxon>
        <taxon>Pseudomonadati</taxon>
        <taxon>Pseudomonadota</taxon>
        <taxon>Gammaproteobacteria</taxon>
        <taxon>Pasteurellales</taxon>
        <taxon>Pasteurellaceae</taxon>
        <taxon>Actinobacillus</taxon>
    </lineage>
</organism>